<feature type="chain" id="PRO_0000277293" description="ATP synthase subunit a, chloroplastic">
    <location>
        <begin position="1"/>
        <end position="248"/>
    </location>
</feature>
<feature type="transmembrane region" description="Helical" evidence="1">
    <location>
        <begin position="35"/>
        <end position="55"/>
    </location>
</feature>
<feature type="transmembrane region" description="Helical" evidence="1">
    <location>
        <begin position="94"/>
        <end position="114"/>
    </location>
</feature>
<feature type="transmembrane region" description="Helical" evidence="1">
    <location>
        <begin position="133"/>
        <end position="153"/>
    </location>
</feature>
<feature type="transmembrane region" description="Helical" evidence="1">
    <location>
        <begin position="202"/>
        <end position="222"/>
    </location>
</feature>
<feature type="transmembrane region" description="Helical" evidence="1">
    <location>
        <begin position="224"/>
        <end position="244"/>
    </location>
</feature>
<comment type="function">
    <text evidence="1">Key component of the proton channel; it plays a direct role in the translocation of protons across the membrane.</text>
</comment>
<comment type="subunit">
    <text evidence="1">F-type ATPases have 2 components, CF(1) - the catalytic core - and CF(0) - the membrane proton channel. CF(1) has five subunits: alpha(3), beta(3), gamma(1), delta(1), epsilon(1). CF(0) has four main subunits: a, b, b' and c.</text>
</comment>
<comment type="subcellular location">
    <subcellularLocation>
        <location evidence="1">Plastid</location>
        <location evidence="1">Chloroplast thylakoid membrane</location>
        <topology evidence="1">Multi-pass membrane protein</topology>
    </subcellularLocation>
</comment>
<comment type="similarity">
    <text evidence="1">Belongs to the ATPase A chain family.</text>
</comment>
<reference key="1">
    <citation type="submission" date="2003-11" db="EMBL/GenBank/DDBJ databases">
        <title>Whole genome sequence of Porphyra yezoensis chloroplast.</title>
        <authorList>
            <person name="Kunimoto M."/>
            <person name="Morishima K."/>
            <person name="Yoshikawa M."/>
            <person name="Fukuda S."/>
            <person name="Kobayashi T."/>
            <person name="Kobayashi M."/>
            <person name="Okazaki T."/>
            <person name="Ohara I."/>
            <person name="Nakayama I."/>
        </authorList>
    </citation>
    <scope>NUCLEOTIDE SEQUENCE [LARGE SCALE GENOMIC DNA]</scope>
    <source>
        <strain>U-51</strain>
    </source>
</reference>
<dbReference type="EMBL" id="AP006715">
    <property type="protein sequence ID" value="BAE92371.1"/>
    <property type="molecule type" value="Genomic_DNA"/>
</dbReference>
<dbReference type="RefSeq" id="YP_536928.1">
    <property type="nucleotide sequence ID" value="NC_007932.1"/>
</dbReference>
<dbReference type="SMR" id="Q1XDP0"/>
<dbReference type="GeneID" id="3978840"/>
<dbReference type="GO" id="GO:0009535">
    <property type="term" value="C:chloroplast thylakoid membrane"/>
    <property type="evidence" value="ECO:0007669"/>
    <property type="project" value="UniProtKB-SubCell"/>
</dbReference>
<dbReference type="GO" id="GO:0005886">
    <property type="term" value="C:plasma membrane"/>
    <property type="evidence" value="ECO:0007669"/>
    <property type="project" value="UniProtKB-UniRule"/>
</dbReference>
<dbReference type="GO" id="GO:0045259">
    <property type="term" value="C:proton-transporting ATP synthase complex"/>
    <property type="evidence" value="ECO:0007669"/>
    <property type="project" value="UniProtKB-KW"/>
</dbReference>
<dbReference type="GO" id="GO:0046933">
    <property type="term" value="F:proton-transporting ATP synthase activity, rotational mechanism"/>
    <property type="evidence" value="ECO:0007669"/>
    <property type="project" value="UniProtKB-UniRule"/>
</dbReference>
<dbReference type="CDD" id="cd00310">
    <property type="entry name" value="ATP-synt_Fo_a_6"/>
    <property type="match status" value="1"/>
</dbReference>
<dbReference type="FunFam" id="1.20.120.220:FF:000001">
    <property type="entry name" value="ATP synthase subunit a, chloroplastic"/>
    <property type="match status" value="1"/>
</dbReference>
<dbReference type="Gene3D" id="1.20.120.220">
    <property type="entry name" value="ATP synthase, F0 complex, subunit A"/>
    <property type="match status" value="1"/>
</dbReference>
<dbReference type="HAMAP" id="MF_01393">
    <property type="entry name" value="ATP_synth_a_bact"/>
    <property type="match status" value="1"/>
</dbReference>
<dbReference type="InterPro" id="IPR045082">
    <property type="entry name" value="ATP_syn_F0_a_bact/chloroplast"/>
</dbReference>
<dbReference type="InterPro" id="IPR000568">
    <property type="entry name" value="ATP_synth_F0_asu"/>
</dbReference>
<dbReference type="InterPro" id="IPR023011">
    <property type="entry name" value="ATP_synth_F0_asu_AS"/>
</dbReference>
<dbReference type="InterPro" id="IPR035908">
    <property type="entry name" value="F0_ATP_A_sf"/>
</dbReference>
<dbReference type="NCBIfam" id="TIGR01131">
    <property type="entry name" value="ATP_synt_6_or_A"/>
    <property type="match status" value="1"/>
</dbReference>
<dbReference type="PANTHER" id="PTHR42823">
    <property type="entry name" value="ATP SYNTHASE SUBUNIT A, CHLOROPLASTIC"/>
    <property type="match status" value="1"/>
</dbReference>
<dbReference type="PANTHER" id="PTHR42823:SF3">
    <property type="entry name" value="ATP SYNTHASE SUBUNIT A, CHLOROPLASTIC"/>
    <property type="match status" value="1"/>
</dbReference>
<dbReference type="Pfam" id="PF00119">
    <property type="entry name" value="ATP-synt_A"/>
    <property type="match status" value="1"/>
</dbReference>
<dbReference type="PRINTS" id="PR00123">
    <property type="entry name" value="ATPASEA"/>
</dbReference>
<dbReference type="SUPFAM" id="SSF81336">
    <property type="entry name" value="F1F0 ATP synthase subunit A"/>
    <property type="match status" value="1"/>
</dbReference>
<dbReference type="PROSITE" id="PS00449">
    <property type="entry name" value="ATPASE_A"/>
    <property type="match status" value="1"/>
</dbReference>
<geneLocation type="chloroplast"/>
<gene>
    <name evidence="1" type="primary">atpI</name>
</gene>
<protein>
    <recommendedName>
        <fullName evidence="1">ATP synthase subunit a, chloroplastic</fullName>
    </recommendedName>
    <alternativeName>
        <fullName evidence="1">ATP synthase F0 sector subunit a</fullName>
    </alternativeName>
    <alternativeName>
        <fullName evidence="1">F-ATPase subunit IV</fullName>
    </alternativeName>
</protein>
<keyword id="KW-0066">ATP synthesis</keyword>
<keyword id="KW-0138">CF(0)</keyword>
<keyword id="KW-0150">Chloroplast</keyword>
<keyword id="KW-0375">Hydrogen ion transport</keyword>
<keyword id="KW-0406">Ion transport</keyword>
<keyword id="KW-0472">Membrane</keyword>
<keyword id="KW-0934">Plastid</keyword>
<keyword id="KW-0793">Thylakoid</keyword>
<keyword id="KW-0812">Transmembrane</keyword>
<keyword id="KW-1133">Transmembrane helix</keyword>
<keyword id="KW-0813">Transport</keyword>
<name>ATPI_PYRYE</name>
<evidence type="ECO:0000255" key="1">
    <source>
        <dbReference type="HAMAP-Rule" id="MF_01393"/>
    </source>
</evidence>
<organism>
    <name type="scientific">Pyropia yezoensis</name>
    <name type="common">Susabi-nori</name>
    <name type="synonym">Porphyra yezoensis</name>
    <dbReference type="NCBI Taxonomy" id="2788"/>
    <lineage>
        <taxon>Eukaryota</taxon>
        <taxon>Rhodophyta</taxon>
        <taxon>Bangiophyceae</taxon>
        <taxon>Bangiales</taxon>
        <taxon>Bangiaceae</taxon>
        <taxon>Pyropia</taxon>
    </lineage>
</organism>
<sequence length="248" mass="27797">MYQNSLIDFNPYNSLSAVEVGKHLYWKIGSLQLHGQVFIVSWLVIATLLTLSFLGTRNLQRIPEKFQNFMEFILEFLQDIAKNQIGEHEYRPWVPYIATLFLFILGCNWAGALIPWKLIHLPEGELAAPTNDINTTVALSLLTSLAYFYAGLSKKGLGYFARYIQPTPVLLPINILEDFTKPLSLSFRLFGNVLADELVVSVFTLLIPILIPLPVMILGLFASSIQALIFSTLSAAYIGEAMEGHGEE</sequence>
<accession>Q1XDP0</accession>
<proteinExistence type="inferred from homology"/>